<comment type="miscellaneous">
    <text>Heat shock protein 70 is a major immunogen in a microfilaremic individuals from a filariasis-endemic area.</text>
</comment>
<comment type="similarity">
    <text evidence="1">Belongs to the heat shock protein 70 family.</text>
</comment>
<feature type="chain" id="PRO_0000078309" description="Heat shock 70 kDa protein">
    <location>
        <begin position="1" status="less than"/>
        <end position="322" status="greater than"/>
    </location>
</feature>
<feature type="non-terminal residue">
    <location>
        <position position="1"/>
    </location>
</feature>
<feature type="non-terminal residue">
    <location>
        <position position="322"/>
    </location>
</feature>
<evidence type="ECO:0000305" key="1"/>
<keyword id="KW-0067">ATP-binding</keyword>
<keyword id="KW-0547">Nucleotide-binding</keyword>
<keyword id="KW-1185">Reference proteome</keyword>
<keyword id="KW-0346">Stress response</keyword>
<organism>
    <name type="scientific">Onchocerca volvulus</name>
    <dbReference type="NCBI Taxonomy" id="6282"/>
    <lineage>
        <taxon>Eukaryota</taxon>
        <taxon>Metazoa</taxon>
        <taxon>Ecdysozoa</taxon>
        <taxon>Nematoda</taxon>
        <taxon>Chromadorea</taxon>
        <taxon>Rhabditida</taxon>
        <taxon>Spirurina</taxon>
        <taxon>Spiruromorpha</taxon>
        <taxon>Filarioidea</taxon>
        <taxon>Onchocercidae</taxon>
        <taxon>Onchocerca</taxon>
    </lineage>
</organism>
<protein>
    <recommendedName>
        <fullName>Heat shock 70 kDa protein</fullName>
        <shortName>HSP70</shortName>
    </recommendedName>
</protein>
<reference key="1">
    <citation type="journal article" date="1989" name="Mol. Biochem. Parasitol.">
        <title>Onchocerca volvulus heat shock protein 70 is a major immunogen in amicrofilaremic individuals from a filariasis-endemic area.</title>
        <authorList>
            <person name="Rothstein N.M."/>
            <person name="Higashi G."/>
            <person name="Yates J."/>
            <person name="Rajan T.V."/>
        </authorList>
    </citation>
    <scope>NUCLEOTIDE SEQUENCE [MRNA]</scope>
</reference>
<sequence>EFKRNDKKDLASNPRALRRLRTACERAKRTLSSSSQASIEIDSLFEGIDFYTNITRARFEELCADLFRSTMDPVEKALRVAKMDKAQVHDIVLVGGSTRIPKVQKLLSDFFSGKELNKSINPDEAVAYGAAVQAAILSGDKSEAVQDLLLLDVAPLSLGIETAGGVMTALIKRNTTIPTKTSQTFTTYSDNQPGVLIQVYEGERAMTKDNNLLGKFELSGIPPAPRGVPQIEVTFDIDANGILNVSAQDKSTGKQNKITITNDKGRLSKDEIERMVQEAEKYKADDEAQKDRIAAKNALESYAFNMKQTIEDEKLKDKISEF</sequence>
<accession>P11503</accession>
<proteinExistence type="evidence at transcript level"/>
<dbReference type="EMBL" id="J04006">
    <property type="protein sequence ID" value="AAA29417.1"/>
    <property type="molecule type" value="mRNA"/>
</dbReference>
<dbReference type="SMR" id="P11503"/>
<dbReference type="STRING" id="6282.P11503"/>
<dbReference type="HOGENOM" id="CLU_005965_1_0_1"/>
<dbReference type="Proteomes" id="UP000024404">
    <property type="component" value="Unassembled WGS sequence"/>
</dbReference>
<dbReference type="GO" id="GO:0005524">
    <property type="term" value="F:ATP binding"/>
    <property type="evidence" value="ECO:0007669"/>
    <property type="project" value="UniProtKB-KW"/>
</dbReference>
<dbReference type="GO" id="GO:0140662">
    <property type="term" value="F:ATP-dependent protein folding chaperone"/>
    <property type="evidence" value="ECO:0007669"/>
    <property type="project" value="InterPro"/>
</dbReference>
<dbReference type="GO" id="GO:0006950">
    <property type="term" value="P:response to stress"/>
    <property type="evidence" value="ECO:0007669"/>
    <property type="project" value="UniProtKB-ARBA"/>
</dbReference>
<dbReference type="FunFam" id="2.60.34.10:FF:000002">
    <property type="entry name" value="Heat shock 70 kDa"/>
    <property type="match status" value="1"/>
</dbReference>
<dbReference type="FunFam" id="3.30.420.40:FF:000172">
    <property type="entry name" value="Heat shock 70 kDa protein"/>
    <property type="match status" value="1"/>
</dbReference>
<dbReference type="FunFam" id="3.90.640.10:FF:000058">
    <property type="entry name" value="Heat shock 70 kDa protein"/>
    <property type="match status" value="1"/>
</dbReference>
<dbReference type="FunFam" id="3.30.420.40:FF:000028">
    <property type="entry name" value="heat shock 70 kDa protein-like"/>
    <property type="match status" value="1"/>
</dbReference>
<dbReference type="Gene3D" id="1.20.1270.10">
    <property type="match status" value="1"/>
</dbReference>
<dbReference type="Gene3D" id="3.30.420.40">
    <property type="match status" value="2"/>
</dbReference>
<dbReference type="Gene3D" id="3.90.640.10">
    <property type="entry name" value="Actin, Chain A, domain 4"/>
    <property type="match status" value="1"/>
</dbReference>
<dbReference type="Gene3D" id="2.60.34.10">
    <property type="entry name" value="Substrate Binding Domain Of DNAk, Chain A, domain 1"/>
    <property type="match status" value="1"/>
</dbReference>
<dbReference type="InterPro" id="IPR043129">
    <property type="entry name" value="ATPase_NBD"/>
</dbReference>
<dbReference type="InterPro" id="IPR018181">
    <property type="entry name" value="Heat_shock_70_CS"/>
</dbReference>
<dbReference type="InterPro" id="IPR029048">
    <property type="entry name" value="HSP70_C_sf"/>
</dbReference>
<dbReference type="InterPro" id="IPR029047">
    <property type="entry name" value="HSP70_peptide-bd_sf"/>
</dbReference>
<dbReference type="InterPro" id="IPR013126">
    <property type="entry name" value="Hsp_70_fam"/>
</dbReference>
<dbReference type="PANTHER" id="PTHR19375">
    <property type="entry name" value="HEAT SHOCK PROTEIN 70KDA"/>
    <property type="match status" value="1"/>
</dbReference>
<dbReference type="Pfam" id="PF00012">
    <property type="entry name" value="HSP70"/>
    <property type="match status" value="1"/>
</dbReference>
<dbReference type="SUPFAM" id="SSF53067">
    <property type="entry name" value="Actin-like ATPase domain"/>
    <property type="match status" value="1"/>
</dbReference>
<dbReference type="SUPFAM" id="SSF100934">
    <property type="entry name" value="Heat shock protein 70kD (HSP70), C-terminal subdomain"/>
    <property type="match status" value="1"/>
</dbReference>
<dbReference type="SUPFAM" id="SSF100920">
    <property type="entry name" value="Heat shock protein 70kD (HSP70), peptide-binding domain"/>
    <property type="match status" value="1"/>
</dbReference>
<dbReference type="PROSITE" id="PS01036">
    <property type="entry name" value="HSP70_3"/>
    <property type="match status" value="1"/>
</dbReference>
<name>HSP70_ONCVO</name>